<evidence type="ECO:0000255" key="1">
    <source>
        <dbReference type="PROSITE-ProRule" id="PRU00404"/>
    </source>
</evidence>
<evidence type="ECO:0000269" key="2">
    <source>
    </source>
</evidence>
<evidence type="ECO:0000269" key="3">
    <source>
    </source>
</evidence>
<evidence type="ECO:0000269" key="4">
    <source>
    </source>
</evidence>
<evidence type="ECO:0000269" key="5">
    <source>
    </source>
</evidence>
<evidence type="ECO:0000305" key="6"/>
<evidence type="ECO:0000305" key="7">
    <source>
    </source>
</evidence>
<evidence type="ECO:0000305" key="8">
    <source>
    </source>
</evidence>
<protein>
    <recommendedName>
        <fullName>AP-1 complex subunit mu-2</fullName>
    </recommendedName>
    <alternativeName>
        <fullName>Adaptor protein complex AP-1 subunit mu-2</fullName>
    </alternativeName>
    <alternativeName>
        <fullName>Adaptor protein-1 mu-adaptin 2</fullName>
    </alternativeName>
    <alternativeName>
        <fullName>Adaptor-related protein complex 1 subunit mu-2</fullName>
    </alternativeName>
    <alternativeName>
        <fullName>At-muB2-Ad</fullName>
    </alternativeName>
    <alternativeName>
        <fullName>Clathrin assembly protein complex 1 mu-2 medium chain</fullName>
    </alternativeName>
    <alternativeName>
        <fullName>Mu1-adaptin 2</fullName>
    </alternativeName>
    <alternativeName>
        <fullName>Protein HAPLESS 13</fullName>
    </alternativeName>
</protein>
<feature type="chain" id="PRO_0000424260" description="AP-1 complex subunit mu-2">
    <location>
        <begin position="1"/>
        <end position="428"/>
    </location>
</feature>
<feature type="domain" description="MHD" evidence="1">
    <location>
        <begin position="170"/>
        <end position="426"/>
    </location>
</feature>
<accession>O22715</accession>
<keyword id="KW-0968">Cytoplasmic vesicle</keyword>
<keyword id="KW-0967">Endosome</keyword>
<keyword id="KW-0333">Golgi apparatus</keyword>
<keyword id="KW-0472">Membrane</keyword>
<keyword id="KW-0653">Protein transport</keyword>
<keyword id="KW-1185">Reference proteome</keyword>
<keyword id="KW-0813">Transport</keyword>
<proteinExistence type="evidence at protein level"/>
<name>AP1M2_ARATH</name>
<gene>
    <name type="primary">AP1M2</name>
    <name type="synonym">HAP13</name>
    <name type="ordered locus">At1g60780</name>
    <name type="ORF">F8A5.29</name>
</gene>
<reference key="1">
    <citation type="journal article" date="2000" name="Nature">
        <title>Sequence and analysis of chromosome 1 of the plant Arabidopsis thaliana.</title>
        <authorList>
            <person name="Theologis A."/>
            <person name="Ecker J.R."/>
            <person name="Palm C.J."/>
            <person name="Federspiel N.A."/>
            <person name="Kaul S."/>
            <person name="White O."/>
            <person name="Alonso J."/>
            <person name="Altafi H."/>
            <person name="Araujo R."/>
            <person name="Bowman C.L."/>
            <person name="Brooks S.Y."/>
            <person name="Buehler E."/>
            <person name="Chan A."/>
            <person name="Chao Q."/>
            <person name="Chen H."/>
            <person name="Cheuk R.F."/>
            <person name="Chin C.W."/>
            <person name="Chung M.K."/>
            <person name="Conn L."/>
            <person name="Conway A.B."/>
            <person name="Conway A.R."/>
            <person name="Creasy T.H."/>
            <person name="Dewar K."/>
            <person name="Dunn P."/>
            <person name="Etgu P."/>
            <person name="Feldblyum T.V."/>
            <person name="Feng J.-D."/>
            <person name="Fong B."/>
            <person name="Fujii C.Y."/>
            <person name="Gill J.E."/>
            <person name="Goldsmith A.D."/>
            <person name="Haas B."/>
            <person name="Hansen N.F."/>
            <person name="Hughes B."/>
            <person name="Huizar L."/>
            <person name="Hunter J.L."/>
            <person name="Jenkins J."/>
            <person name="Johnson-Hopson C."/>
            <person name="Khan S."/>
            <person name="Khaykin E."/>
            <person name="Kim C.J."/>
            <person name="Koo H.L."/>
            <person name="Kremenetskaia I."/>
            <person name="Kurtz D.B."/>
            <person name="Kwan A."/>
            <person name="Lam B."/>
            <person name="Langin-Hooper S."/>
            <person name="Lee A."/>
            <person name="Lee J.M."/>
            <person name="Lenz C.A."/>
            <person name="Li J.H."/>
            <person name="Li Y.-P."/>
            <person name="Lin X."/>
            <person name="Liu S.X."/>
            <person name="Liu Z.A."/>
            <person name="Luros J.S."/>
            <person name="Maiti R."/>
            <person name="Marziali A."/>
            <person name="Militscher J."/>
            <person name="Miranda M."/>
            <person name="Nguyen M."/>
            <person name="Nierman W.C."/>
            <person name="Osborne B.I."/>
            <person name="Pai G."/>
            <person name="Peterson J."/>
            <person name="Pham P.K."/>
            <person name="Rizzo M."/>
            <person name="Rooney T."/>
            <person name="Rowley D."/>
            <person name="Sakano H."/>
            <person name="Salzberg S.L."/>
            <person name="Schwartz J.R."/>
            <person name="Shinn P."/>
            <person name="Southwick A.M."/>
            <person name="Sun H."/>
            <person name="Tallon L.J."/>
            <person name="Tambunga G."/>
            <person name="Toriumi M.J."/>
            <person name="Town C.D."/>
            <person name="Utterback T."/>
            <person name="Van Aken S."/>
            <person name="Vaysberg M."/>
            <person name="Vysotskaia V.S."/>
            <person name="Walker M."/>
            <person name="Wu D."/>
            <person name="Yu G."/>
            <person name="Fraser C.M."/>
            <person name="Venter J.C."/>
            <person name="Davis R.W."/>
        </authorList>
    </citation>
    <scope>NUCLEOTIDE SEQUENCE [LARGE SCALE GENOMIC DNA]</scope>
    <source>
        <strain>cv. Columbia</strain>
    </source>
</reference>
<reference key="2">
    <citation type="journal article" date="2017" name="Plant J.">
        <title>Araport11: a complete reannotation of the Arabidopsis thaliana reference genome.</title>
        <authorList>
            <person name="Cheng C.Y."/>
            <person name="Krishnakumar V."/>
            <person name="Chan A.P."/>
            <person name="Thibaud-Nissen F."/>
            <person name="Schobel S."/>
            <person name="Town C.D."/>
        </authorList>
    </citation>
    <scope>GENOME REANNOTATION</scope>
    <source>
        <strain>cv. Columbia</strain>
    </source>
</reference>
<reference key="3">
    <citation type="journal article" date="2003" name="Science">
        <title>Empirical analysis of transcriptional activity in the Arabidopsis genome.</title>
        <authorList>
            <person name="Yamada K."/>
            <person name="Lim J."/>
            <person name="Dale J.M."/>
            <person name="Chen H."/>
            <person name="Shinn P."/>
            <person name="Palm C.J."/>
            <person name="Southwick A.M."/>
            <person name="Wu H.C."/>
            <person name="Kim C.J."/>
            <person name="Nguyen M."/>
            <person name="Pham P.K."/>
            <person name="Cheuk R.F."/>
            <person name="Karlin-Newmann G."/>
            <person name="Liu S.X."/>
            <person name="Lam B."/>
            <person name="Sakano H."/>
            <person name="Wu T."/>
            <person name="Yu G."/>
            <person name="Miranda M."/>
            <person name="Quach H.L."/>
            <person name="Tripp M."/>
            <person name="Chang C.H."/>
            <person name="Lee J.M."/>
            <person name="Toriumi M.J."/>
            <person name="Chan M.M."/>
            <person name="Tang C.C."/>
            <person name="Onodera C.S."/>
            <person name="Deng J.M."/>
            <person name="Akiyama K."/>
            <person name="Ansari Y."/>
            <person name="Arakawa T."/>
            <person name="Banh J."/>
            <person name="Banno F."/>
            <person name="Bowser L."/>
            <person name="Brooks S.Y."/>
            <person name="Carninci P."/>
            <person name="Chao Q."/>
            <person name="Choy N."/>
            <person name="Enju A."/>
            <person name="Goldsmith A.D."/>
            <person name="Gurjal M."/>
            <person name="Hansen N.F."/>
            <person name="Hayashizaki Y."/>
            <person name="Johnson-Hopson C."/>
            <person name="Hsuan V.W."/>
            <person name="Iida K."/>
            <person name="Karnes M."/>
            <person name="Khan S."/>
            <person name="Koesema E."/>
            <person name="Ishida J."/>
            <person name="Jiang P.X."/>
            <person name="Jones T."/>
            <person name="Kawai J."/>
            <person name="Kamiya A."/>
            <person name="Meyers C."/>
            <person name="Nakajima M."/>
            <person name="Narusaka M."/>
            <person name="Seki M."/>
            <person name="Sakurai T."/>
            <person name="Satou M."/>
            <person name="Tamse R."/>
            <person name="Vaysberg M."/>
            <person name="Wallender E.K."/>
            <person name="Wong C."/>
            <person name="Yamamura Y."/>
            <person name="Yuan S."/>
            <person name="Shinozaki K."/>
            <person name="Davis R.W."/>
            <person name="Theologis A."/>
            <person name="Ecker J.R."/>
        </authorList>
    </citation>
    <scope>NUCLEOTIDE SEQUENCE [LARGE SCALE MRNA]</scope>
    <source>
        <strain>cv. Columbia</strain>
    </source>
</reference>
<reference key="4">
    <citation type="journal article" date="2001" name="Mol. Biol. Cell">
        <title>Adaptins: the final recount.</title>
        <authorList>
            <person name="Boehm M."/>
            <person name="Bonifacino J.S."/>
        </authorList>
    </citation>
    <scope>GENE FAMILY</scope>
    <scope>REVIEW</scope>
</reference>
<reference key="5">
    <citation type="journal article" date="2004" name="Genetics">
        <title>Arabidopsis hapless mutations define essential gametophytic functions.</title>
        <authorList>
            <person name="Johnson M.A."/>
            <person name="von Besser K."/>
            <person name="Zhou Q."/>
            <person name="Smith E."/>
            <person name="Aux G."/>
            <person name="Patton D."/>
            <person name="Levin J.Z."/>
            <person name="Preuss D."/>
        </authorList>
    </citation>
    <scope>DISRUPTION PHENOTYPE</scope>
</reference>
<reference key="6">
    <citation type="journal article" date="2004" name="Plant J.">
        <title>Arabidopsis muA-adaptin interacts with the tyrosine motif of the vacuolar sorting receptor VSR-PS1.</title>
        <authorList>
            <person name="Happel N."/>
            <person name="Hoening S."/>
            <person name="Neuhaus J.M."/>
            <person name="Paris N."/>
            <person name="Robinson D.G."/>
            <person name="Holstein S.E."/>
        </authorList>
    </citation>
    <scope>GENE FAMILY</scope>
</reference>
<reference key="7">
    <citation type="journal article" date="2013" name="Plant Cell Physiol.">
        <title>The AP-1 mu adaptin is required for KNOLLE localization at the cell plate to mediate cytokinesis in Arabidopsis.</title>
        <authorList>
            <person name="Teh O.K."/>
            <person name="Shimono Y."/>
            <person name="Shirakawa M."/>
            <person name="Fukao Y."/>
            <person name="Tamura K."/>
            <person name="Shimada T."/>
            <person name="Hara-Nishimura I."/>
        </authorList>
    </citation>
    <scope>SUBCELLULAR LOCATION</scope>
    <scope>TISSUE SPECIFICITY</scope>
    <scope>DISRUPTION PHENOTYPE</scope>
    <scope>FUNCTION</scope>
    <scope>IDENTIFICATION BY MASS SPECTROMETRY</scope>
    <scope>COMPONENT OF THE AP-1 COMPLEX</scope>
</reference>
<reference key="8">
    <citation type="journal article" date="2013" name="Plant Physiol.">
        <title>HAPLESS13, the Arabidopsis mu1 adaptin, is essential for protein sorting at the trans-Golgi network/early endosome.</title>
        <authorList>
            <person name="Wang J.G."/>
            <person name="Li S."/>
            <person name="Zhao X.Y."/>
            <person name="Zhou L.Z."/>
            <person name="Huang G.Q."/>
            <person name="Feng C."/>
            <person name="Zhang Y."/>
        </authorList>
    </citation>
    <scope>TISSUE SPECIFICITY</scope>
    <scope>DISRUPTION PHENOTYPE</scope>
    <scope>FUNCTION</scope>
    <scope>SUBCELLULAR LOCATION</scope>
    <scope>COMPONENT OF THE AP-1 COMPLEX</scope>
</reference>
<reference key="9">
    <citation type="journal article" date="2013" name="Proc. Natl. Acad. Sci. U.S.A.">
        <title>Arabidopsis mu-adaptin subunit AP1M of adaptor protein complex 1 mediates late secretory and vacuolar traffic and is required for growth.</title>
        <authorList>
            <person name="Park M."/>
            <person name="Song K."/>
            <person name="Reichardt I."/>
            <person name="Kim H."/>
            <person name="Mayer U."/>
            <person name="Stierhof Y.D."/>
            <person name="Hwang I."/>
            <person name="Juergens G."/>
        </authorList>
    </citation>
    <scope>DISRUPTION PHENOTYPE</scope>
    <scope>FUNCTION</scope>
    <scope>COMPONENT OF THE AP-1 COMPLEX</scope>
    <scope>SUBCELLULAR LOCATION</scope>
</reference>
<organism>
    <name type="scientific">Arabidopsis thaliana</name>
    <name type="common">Mouse-ear cress</name>
    <dbReference type="NCBI Taxonomy" id="3702"/>
    <lineage>
        <taxon>Eukaryota</taxon>
        <taxon>Viridiplantae</taxon>
        <taxon>Streptophyta</taxon>
        <taxon>Embryophyta</taxon>
        <taxon>Tracheophyta</taxon>
        <taxon>Spermatophyta</taxon>
        <taxon>Magnoliopsida</taxon>
        <taxon>eudicotyledons</taxon>
        <taxon>Gunneridae</taxon>
        <taxon>Pentapetalae</taxon>
        <taxon>rosids</taxon>
        <taxon>malvids</taxon>
        <taxon>Brassicales</taxon>
        <taxon>Brassicaceae</taxon>
        <taxon>Camelineae</taxon>
        <taxon>Arabidopsis</taxon>
    </lineage>
</organism>
<comment type="function">
    <text evidence="3 4 5">Subunit of clathrin-associated adaptor protein complex 1 that plays a role in protein sorting at the trans-Golgi network and early endosomes (TGN/EE). The AP complexes mediate the recruitment of clathrin to membranes and the recognition of sorting signals within the cytosolic tails of transmembrane cargo molecules. Required for KNOLLE localization at the cell plate to mediate cytokinesis. Functions redundantly with AP1M1 in multiple post-Golgi trafficking pathways leading from the TGN to the vacuole, the plasma membrane, and the cell-division plane.</text>
</comment>
<comment type="subunit">
    <text>Adaptor protein complex 1 (AP-1) is a heterotetramer composed of two large adaptins (gamma-type subunit and beta-type subunit), a medium adaptin (mu-type subunit) and a small adaptin (sigma-type subunit).</text>
</comment>
<comment type="subcellular location">
    <subcellularLocation>
        <location evidence="3 4 5">Golgi apparatus</location>
        <location evidence="3 4 5">trans-Golgi network membrane</location>
        <topology evidence="7">Peripheral membrane protein</topology>
        <orientation evidence="7">Cytoplasmic side</orientation>
    </subcellularLocation>
    <subcellularLocation>
        <location evidence="5">Early endosome membrane</location>
        <topology evidence="7">Peripheral membrane protein</topology>
        <orientation evidence="7">Cytoplasmic side</orientation>
    </subcellularLocation>
    <subcellularLocation>
        <location evidence="8">Cytoplasmic vesicle</location>
        <location evidence="8">Clathrin-coated vesicle membrane</location>
        <topology evidence="7">Peripheral membrane protein</topology>
        <orientation evidence="7">Cytoplasmic side</orientation>
    </subcellularLocation>
</comment>
<comment type="tissue specificity">
    <text evidence="3 5">Ubiquitous.</text>
</comment>
<comment type="disruption phenotype">
    <text evidence="2 3 4 5">Short pollen tube growth and failure to exit the style (PubMed:15514068). Compromised cytokinesis due to the mislocalization of the KNOLLE syntaxin (PubMed:23543752, PubMed:23733933). Full spectrum of growth defects, suggestive of compromised auxin signaling and of defective RLK signaling. Cell morphogenesis was also disturbed (PubMed:23766365). Impaired pollen function and growth retardation phenotype (PubMed:23733933).</text>
</comment>
<comment type="similarity">
    <text evidence="6">Belongs to the adaptor complexes medium subunit family.</text>
</comment>
<sequence>MAGAASALFLLDIKGRVLVWRDYRGDVSAAQAERFFTKLIEKEGDSQSNDPVAYDNGVTYMFVQHSNVYLMIASRQNCNAASLLFFLHRVVDVFKHYFEELEEESLRDNFVVVYELLDEMMDFGYPQYTEARILSEFIKTDAYRMEVTQRPPMAVTNAVSWRSEGIQYKKNEVFLDVIENVNILVNSNGQIVRSDVVGALKMRTYLTGMPECKLGLNDRVLLEAQGRATKGKAIDLEDIKFHQCVRLARFENDRTISFIPPDGAFDLMTYRLSTQVKPLIWVEAQIESHSRSRVEMLIKARSQFKERSTATNVEIELPVPTDASNPTVRTSLGSASYAPEKDALVWKIKSFPGNKEYMLRAEFHLPSITAEEATPERKAPIRVKFEIPYFTVSGIQVRYLKIIEKSGYQALPWVRYITMAGEYELRLV</sequence>
<dbReference type="EMBL" id="AC002292">
    <property type="protein sequence ID" value="AAB71967.1"/>
    <property type="molecule type" value="Genomic_DNA"/>
</dbReference>
<dbReference type="EMBL" id="CP002684">
    <property type="protein sequence ID" value="AEE33731.1"/>
    <property type="molecule type" value="Genomic_DNA"/>
</dbReference>
<dbReference type="EMBL" id="AY099652">
    <property type="protein sequence ID" value="AAM20503.1"/>
    <property type="molecule type" value="mRNA"/>
</dbReference>
<dbReference type="EMBL" id="BT002144">
    <property type="protein sequence ID" value="AAN72155.1"/>
    <property type="molecule type" value="mRNA"/>
</dbReference>
<dbReference type="PIR" id="C96633">
    <property type="entry name" value="C96633"/>
</dbReference>
<dbReference type="RefSeq" id="NP_176277.1">
    <property type="nucleotide sequence ID" value="NM_104761.4"/>
</dbReference>
<dbReference type="SMR" id="O22715"/>
<dbReference type="BioGRID" id="27596">
    <property type="interactions" value="18"/>
</dbReference>
<dbReference type="FunCoup" id="O22715">
    <property type="interactions" value="4417"/>
</dbReference>
<dbReference type="STRING" id="3702.O22715"/>
<dbReference type="iPTMnet" id="O22715"/>
<dbReference type="PaxDb" id="3702-AT1G60780.1"/>
<dbReference type="ProMEX" id="O22715"/>
<dbReference type="ProteomicsDB" id="240598"/>
<dbReference type="EnsemblPlants" id="AT1G60780.1">
    <property type="protein sequence ID" value="AT1G60780.1"/>
    <property type="gene ID" value="AT1G60780"/>
</dbReference>
<dbReference type="GeneID" id="842372"/>
<dbReference type="Gramene" id="AT1G60780.1">
    <property type="protein sequence ID" value="AT1G60780.1"/>
    <property type="gene ID" value="AT1G60780"/>
</dbReference>
<dbReference type="KEGG" id="ath:AT1G60780"/>
<dbReference type="Araport" id="AT1G60780"/>
<dbReference type="TAIR" id="AT1G60780">
    <property type="gene designation" value="HAP13"/>
</dbReference>
<dbReference type="eggNOG" id="KOG0937">
    <property type="taxonomic scope" value="Eukaryota"/>
</dbReference>
<dbReference type="HOGENOM" id="CLU_026996_0_0_1"/>
<dbReference type="InParanoid" id="O22715"/>
<dbReference type="OMA" id="KPLIWCD"/>
<dbReference type="OrthoDB" id="10259133at2759"/>
<dbReference type="PhylomeDB" id="O22715"/>
<dbReference type="CD-CODE" id="4299E36E">
    <property type="entry name" value="Nucleolus"/>
</dbReference>
<dbReference type="PRO" id="PR:O22715"/>
<dbReference type="Proteomes" id="UP000006548">
    <property type="component" value="Chromosome 1"/>
</dbReference>
<dbReference type="ExpressionAtlas" id="O22715">
    <property type="expression patterns" value="baseline and differential"/>
</dbReference>
<dbReference type="GO" id="GO:0030121">
    <property type="term" value="C:AP-1 adaptor complex"/>
    <property type="evidence" value="ECO:0000353"/>
    <property type="project" value="TAIR"/>
</dbReference>
<dbReference type="GO" id="GO:0031901">
    <property type="term" value="C:early endosome membrane"/>
    <property type="evidence" value="ECO:0007669"/>
    <property type="project" value="UniProtKB-SubCell"/>
</dbReference>
<dbReference type="GO" id="GO:0005634">
    <property type="term" value="C:nucleus"/>
    <property type="evidence" value="ECO:0007005"/>
    <property type="project" value="TAIR"/>
</dbReference>
<dbReference type="GO" id="GO:0005802">
    <property type="term" value="C:trans-Golgi network"/>
    <property type="evidence" value="ECO:0000314"/>
    <property type="project" value="TAIR"/>
</dbReference>
<dbReference type="GO" id="GO:0012510">
    <property type="term" value="C:trans-Golgi network transport vesicle membrane"/>
    <property type="evidence" value="ECO:0000315"/>
    <property type="project" value="TAIR"/>
</dbReference>
<dbReference type="GO" id="GO:0035653">
    <property type="term" value="P:clathrin-coated vesicle cargo loading, AP-1-mediated"/>
    <property type="evidence" value="ECO:0000353"/>
    <property type="project" value="TAIR"/>
</dbReference>
<dbReference type="GO" id="GO:0006886">
    <property type="term" value="P:intracellular protein transport"/>
    <property type="evidence" value="ECO:0000315"/>
    <property type="project" value="TAIR"/>
</dbReference>
<dbReference type="GO" id="GO:0006892">
    <property type="term" value="P:post-Golgi vesicle-mediated transport"/>
    <property type="evidence" value="ECO:0000315"/>
    <property type="project" value="TAIR"/>
</dbReference>
<dbReference type="GO" id="GO:0007034">
    <property type="term" value="P:vacuolar transport"/>
    <property type="evidence" value="ECO:0000315"/>
    <property type="project" value="TAIR"/>
</dbReference>
<dbReference type="CDD" id="cd09250">
    <property type="entry name" value="AP-1_Mu1_Cterm"/>
    <property type="match status" value="1"/>
</dbReference>
<dbReference type="CDD" id="cd14835">
    <property type="entry name" value="AP1_Mu_N"/>
    <property type="match status" value="1"/>
</dbReference>
<dbReference type="FunFam" id="3.30.450.60:FF:000006">
    <property type="entry name" value="AP-1 complex subunit mu-1 isoform 1"/>
    <property type="match status" value="1"/>
</dbReference>
<dbReference type="FunFam" id="2.60.40.1170:FF:000029">
    <property type="entry name" value="AP-1 complex subunit mu-2"/>
    <property type="match status" value="1"/>
</dbReference>
<dbReference type="Gene3D" id="3.30.450.60">
    <property type="match status" value="1"/>
</dbReference>
<dbReference type="Gene3D" id="2.60.40.1170">
    <property type="entry name" value="Mu homology domain, subdomain B"/>
    <property type="match status" value="2"/>
</dbReference>
<dbReference type="InterPro" id="IPR050431">
    <property type="entry name" value="Adaptor_comp_med_subunit"/>
</dbReference>
<dbReference type="InterPro" id="IPR036168">
    <property type="entry name" value="AP2_Mu_C_sf"/>
</dbReference>
<dbReference type="InterPro" id="IPR022775">
    <property type="entry name" value="AP_mu_sigma_su"/>
</dbReference>
<dbReference type="InterPro" id="IPR001392">
    <property type="entry name" value="Clathrin_mu"/>
</dbReference>
<dbReference type="InterPro" id="IPR018240">
    <property type="entry name" value="Clathrin_mu_CS"/>
</dbReference>
<dbReference type="InterPro" id="IPR011012">
    <property type="entry name" value="Longin-like_dom_sf"/>
</dbReference>
<dbReference type="InterPro" id="IPR028565">
    <property type="entry name" value="MHD"/>
</dbReference>
<dbReference type="PANTHER" id="PTHR10529">
    <property type="entry name" value="AP COMPLEX SUBUNIT MU"/>
    <property type="match status" value="1"/>
</dbReference>
<dbReference type="Pfam" id="PF00928">
    <property type="entry name" value="Adap_comp_sub"/>
    <property type="match status" value="1"/>
</dbReference>
<dbReference type="Pfam" id="PF01217">
    <property type="entry name" value="Clat_adaptor_s"/>
    <property type="match status" value="1"/>
</dbReference>
<dbReference type="PIRSF" id="PIRSF005992">
    <property type="entry name" value="Clathrin_mu"/>
    <property type="match status" value="1"/>
</dbReference>
<dbReference type="PRINTS" id="PR00314">
    <property type="entry name" value="CLATHRINADPT"/>
</dbReference>
<dbReference type="SUPFAM" id="SSF49447">
    <property type="entry name" value="Second domain of Mu2 adaptin subunit (ap50) of ap2 adaptor"/>
    <property type="match status" value="1"/>
</dbReference>
<dbReference type="SUPFAM" id="SSF64356">
    <property type="entry name" value="SNARE-like"/>
    <property type="match status" value="1"/>
</dbReference>
<dbReference type="PROSITE" id="PS00990">
    <property type="entry name" value="CLAT_ADAPTOR_M_1"/>
    <property type="match status" value="1"/>
</dbReference>
<dbReference type="PROSITE" id="PS00991">
    <property type="entry name" value="CLAT_ADAPTOR_M_2"/>
    <property type="match status" value="1"/>
</dbReference>
<dbReference type="PROSITE" id="PS51072">
    <property type="entry name" value="MHD"/>
    <property type="match status" value="1"/>
</dbReference>